<gene>
    <name evidence="1" type="primary">pstB</name>
    <name type="ordered locus">Moth_0114</name>
</gene>
<reference key="1">
    <citation type="journal article" date="2008" name="Environ. Microbiol.">
        <title>The complete genome sequence of Moorella thermoacetica (f. Clostridium thermoaceticum).</title>
        <authorList>
            <person name="Pierce E."/>
            <person name="Xie G."/>
            <person name="Barabote R.D."/>
            <person name="Saunders E."/>
            <person name="Han C.S."/>
            <person name="Detter J.C."/>
            <person name="Richardson P."/>
            <person name="Brettin T.S."/>
            <person name="Das A."/>
            <person name="Ljungdahl L.G."/>
            <person name="Ragsdale S.W."/>
        </authorList>
    </citation>
    <scope>NUCLEOTIDE SEQUENCE [LARGE SCALE GENOMIC DNA]</scope>
    <source>
        <strain>ATCC 39073 / JCM 9320</strain>
    </source>
</reference>
<proteinExistence type="inferred from homology"/>
<feature type="chain" id="PRO_0000272478" description="Phosphate import ATP-binding protein PstB">
    <location>
        <begin position="1"/>
        <end position="252"/>
    </location>
</feature>
<feature type="domain" description="ABC transporter" evidence="1">
    <location>
        <begin position="6"/>
        <end position="247"/>
    </location>
</feature>
<feature type="binding site" evidence="1">
    <location>
        <begin position="38"/>
        <end position="45"/>
    </location>
    <ligand>
        <name>ATP</name>
        <dbReference type="ChEBI" id="CHEBI:30616"/>
    </ligand>
</feature>
<protein>
    <recommendedName>
        <fullName evidence="1">Phosphate import ATP-binding protein PstB</fullName>
        <ecNumber evidence="1">7.3.2.1</ecNumber>
    </recommendedName>
    <alternativeName>
        <fullName evidence="1">ABC phosphate transporter</fullName>
    </alternativeName>
    <alternativeName>
        <fullName evidence="1">Phosphate-transporting ATPase</fullName>
    </alternativeName>
</protein>
<name>PSTB_MOOTA</name>
<accession>Q2RM86</accession>
<evidence type="ECO:0000255" key="1">
    <source>
        <dbReference type="HAMAP-Rule" id="MF_01702"/>
    </source>
</evidence>
<keyword id="KW-0067">ATP-binding</keyword>
<keyword id="KW-1003">Cell membrane</keyword>
<keyword id="KW-0472">Membrane</keyword>
<keyword id="KW-0547">Nucleotide-binding</keyword>
<keyword id="KW-0592">Phosphate transport</keyword>
<keyword id="KW-1278">Translocase</keyword>
<keyword id="KW-0813">Transport</keyword>
<organism>
    <name type="scientific">Moorella thermoacetica (strain ATCC 39073 / JCM 9320)</name>
    <dbReference type="NCBI Taxonomy" id="264732"/>
    <lineage>
        <taxon>Bacteria</taxon>
        <taxon>Bacillati</taxon>
        <taxon>Bacillota</taxon>
        <taxon>Clostridia</taxon>
        <taxon>Moorellales</taxon>
        <taxon>Moorellaceae</taxon>
        <taxon>Moorella</taxon>
    </lineage>
</organism>
<sequence>MAQPKITINNLNFYYGSNRALKDVNLEIQAHAVTALIGPSGCGKSTFLRTLNRLNDLIDGVRISGEILLDGQNIYAPEVDVVALRKRVGMVFQRPNPFPMSIYDNIAYGPRIHGITSRRELDGIVERSLKAAALWDEVAGRLRHSALGLSGGQQQRLCIARLLAVEPEVVLMDEPSSALDPISTLKIEELIHNLKEKYTIVIVTHNMQQAARVSDYTAFFLNGEMVEYDETEIIFTKPRDKRTEDYITGRFG</sequence>
<dbReference type="EC" id="7.3.2.1" evidence="1"/>
<dbReference type="EMBL" id="CP000232">
    <property type="protein sequence ID" value="ABC18453.1"/>
    <property type="molecule type" value="Genomic_DNA"/>
</dbReference>
<dbReference type="RefSeq" id="YP_428996.1">
    <property type="nucleotide sequence ID" value="NC_007644.1"/>
</dbReference>
<dbReference type="SMR" id="Q2RM86"/>
<dbReference type="STRING" id="264732.Moth_0114"/>
<dbReference type="EnsemblBacteria" id="ABC18453">
    <property type="protein sequence ID" value="ABC18453"/>
    <property type="gene ID" value="Moth_0114"/>
</dbReference>
<dbReference type="KEGG" id="mta:Moth_0114"/>
<dbReference type="PATRIC" id="fig|264732.11.peg.119"/>
<dbReference type="eggNOG" id="COG1117">
    <property type="taxonomic scope" value="Bacteria"/>
</dbReference>
<dbReference type="HOGENOM" id="CLU_000604_1_22_9"/>
<dbReference type="OrthoDB" id="9802264at2"/>
<dbReference type="GO" id="GO:0005886">
    <property type="term" value="C:plasma membrane"/>
    <property type="evidence" value="ECO:0007669"/>
    <property type="project" value="UniProtKB-SubCell"/>
</dbReference>
<dbReference type="GO" id="GO:0005524">
    <property type="term" value="F:ATP binding"/>
    <property type="evidence" value="ECO:0007669"/>
    <property type="project" value="UniProtKB-KW"/>
</dbReference>
<dbReference type="GO" id="GO:0016887">
    <property type="term" value="F:ATP hydrolysis activity"/>
    <property type="evidence" value="ECO:0007669"/>
    <property type="project" value="InterPro"/>
</dbReference>
<dbReference type="GO" id="GO:0015415">
    <property type="term" value="F:ATPase-coupled phosphate ion transmembrane transporter activity"/>
    <property type="evidence" value="ECO:0007669"/>
    <property type="project" value="UniProtKB-EC"/>
</dbReference>
<dbReference type="GO" id="GO:0035435">
    <property type="term" value="P:phosphate ion transmembrane transport"/>
    <property type="evidence" value="ECO:0007669"/>
    <property type="project" value="InterPro"/>
</dbReference>
<dbReference type="CDD" id="cd03260">
    <property type="entry name" value="ABC_PstB_phosphate_transporter"/>
    <property type="match status" value="1"/>
</dbReference>
<dbReference type="FunFam" id="3.40.50.300:FF:000132">
    <property type="entry name" value="Phosphate import ATP-binding protein PstB"/>
    <property type="match status" value="1"/>
</dbReference>
<dbReference type="Gene3D" id="3.40.50.300">
    <property type="entry name" value="P-loop containing nucleotide triphosphate hydrolases"/>
    <property type="match status" value="1"/>
</dbReference>
<dbReference type="InterPro" id="IPR003593">
    <property type="entry name" value="AAA+_ATPase"/>
</dbReference>
<dbReference type="InterPro" id="IPR003439">
    <property type="entry name" value="ABC_transporter-like_ATP-bd"/>
</dbReference>
<dbReference type="InterPro" id="IPR017871">
    <property type="entry name" value="ABC_transporter-like_CS"/>
</dbReference>
<dbReference type="InterPro" id="IPR027417">
    <property type="entry name" value="P-loop_NTPase"/>
</dbReference>
<dbReference type="InterPro" id="IPR005670">
    <property type="entry name" value="PstB-like"/>
</dbReference>
<dbReference type="NCBIfam" id="TIGR00972">
    <property type="entry name" value="3a0107s01c2"/>
    <property type="match status" value="1"/>
</dbReference>
<dbReference type="PANTHER" id="PTHR43423">
    <property type="entry name" value="ABC TRANSPORTER I FAMILY MEMBER 17"/>
    <property type="match status" value="1"/>
</dbReference>
<dbReference type="PANTHER" id="PTHR43423:SF1">
    <property type="entry name" value="ABC TRANSPORTER I FAMILY MEMBER 17"/>
    <property type="match status" value="1"/>
</dbReference>
<dbReference type="Pfam" id="PF00005">
    <property type="entry name" value="ABC_tran"/>
    <property type="match status" value="1"/>
</dbReference>
<dbReference type="SMART" id="SM00382">
    <property type="entry name" value="AAA"/>
    <property type="match status" value="1"/>
</dbReference>
<dbReference type="SUPFAM" id="SSF52540">
    <property type="entry name" value="P-loop containing nucleoside triphosphate hydrolases"/>
    <property type="match status" value="1"/>
</dbReference>
<dbReference type="PROSITE" id="PS00211">
    <property type="entry name" value="ABC_TRANSPORTER_1"/>
    <property type="match status" value="1"/>
</dbReference>
<dbReference type="PROSITE" id="PS50893">
    <property type="entry name" value="ABC_TRANSPORTER_2"/>
    <property type="match status" value="1"/>
</dbReference>
<dbReference type="PROSITE" id="PS51238">
    <property type="entry name" value="PSTB"/>
    <property type="match status" value="1"/>
</dbReference>
<comment type="function">
    <text evidence="1">Part of the ABC transporter complex PstSACB involved in phosphate import. Responsible for energy coupling to the transport system.</text>
</comment>
<comment type="catalytic activity">
    <reaction evidence="1">
        <text>phosphate(out) + ATP + H2O = ADP + 2 phosphate(in) + H(+)</text>
        <dbReference type="Rhea" id="RHEA:24440"/>
        <dbReference type="ChEBI" id="CHEBI:15377"/>
        <dbReference type="ChEBI" id="CHEBI:15378"/>
        <dbReference type="ChEBI" id="CHEBI:30616"/>
        <dbReference type="ChEBI" id="CHEBI:43474"/>
        <dbReference type="ChEBI" id="CHEBI:456216"/>
        <dbReference type="EC" id="7.3.2.1"/>
    </reaction>
</comment>
<comment type="subunit">
    <text evidence="1">The complex is composed of two ATP-binding proteins (PstB), two transmembrane proteins (PstC and PstA) and a solute-binding protein (PstS).</text>
</comment>
<comment type="subcellular location">
    <subcellularLocation>
        <location evidence="1">Cell membrane</location>
        <topology evidence="1">Peripheral membrane protein</topology>
    </subcellularLocation>
</comment>
<comment type="similarity">
    <text evidence="1">Belongs to the ABC transporter superfamily. Phosphate importer (TC 3.A.1.7) family.</text>
</comment>